<comment type="function">
    <text evidence="1">Catalyzes the N-acylation of UDP-3-O-acylglucosamine using 3-hydroxyacyl-ACP as the acyl donor. Is involved in the biosynthesis of lipid A, a phosphorylated glycolipid that anchors the lipopolysaccharide to the outer membrane of the cell.</text>
</comment>
<comment type="catalytic activity">
    <reaction evidence="1">
        <text>a UDP-3-O-[(3R)-3-hydroxyacyl]-alpha-D-glucosamine + a (3R)-hydroxyacyl-[ACP] = a UDP-2-N,3-O-bis[(3R)-3-hydroxyacyl]-alpha-D-glucosamine + holo-[ACP] + H(+)</text>
        <dbReference type="Rhea" id="RHEA:53836"/>
        <dbReference type="Rhea" id="RHEA-COMP:9685"/>
        <dbReference type="Rhea" id="RHEA-COMP:9945"/>
        <dbReference type="ChEBI" id="CHEBI:15378"/>
        <dbReference type="ChEBI" id="CHEBI:64479"/>
        <dbReference type="ChEBI" id="CHEBI:78827"/>
        <dbReference type="ChEBI" id="CHEBI:137740"/>
        <dbReference type="ChEBI" id="CHEBI:137748"/>
        <dbReference type="EC" id="2.3.1.191"/>
    </reaction>
</comment>
<comment type="pathway">
    <text evidence="1">Bacterial outer membrane biogenesis; LPS lipid A biosynthesis.</text>
</comment>
<comment type="subunit">
    <text evidence="1">Homotrimer.</text>
</comment>
<comment type="similarity">
    <text evidence="1">Belongs to the transferase hexapeptide repeat family. LpxD subfamily.</text>
</comment>
<accession>A1V558</accession>
<gene>
    <name evidence="1" type="primary">lpxD</name>
    <name type="ordered locus">BMASAVP1_A2045</name>
</gene>
<sequence length="361" mass="36796">MALTLEALAARFGGEIVGDGRCEVGALAPLDQAGPRQLAFLANPKYLAQVETTGAGAVLIAPGDLEKLGAAAHGRNFIVTPNPYAYFARVAQMFIDLAAPPRAAGVHPSATIDPAAQVAASAVIGPHVTVEAGAVIGERAQLDANVFVGRGTRIGDDSHLYPNVAIYHGCTLGPRAIVHSGAVIGSDGFGFAPDFVGEGDARTGAWVKIPQVGGVKVGPDVEIGANTTIDRGAMADTVIDECVKIDNLVQIGHNCRIGAYTVIAGCAGIAGSTTIGKHCMIGGAVGIAGHVTLGDYVIVTAKSGVSKSLPKAGIYTSAFPAVEHGDWNRSAALVRNLDKLRDRIKALETALVAREGDAGGA</sequence>
<evidence type="ECO:0000255" key="1">
    <source>
        <dbReference type="HAMAP-Rule" id="MF_00523"/>
    </source>
</evidence>
<keyword id="KW-0012">Acyltransferase</keyword>
<keyword id="KW-0441">Lipid A biosynthesis</keyword>
<keyword id="KW-0444">Lipid biosynthesis</keyword>
<keyword id="KW-0443">Lipid metabolism</keyword>
<keyword id="KW-0677">Repeat</keyword>
<keyword id="KW-0808">Transferase</keyword>
<proteinExistence type="inferred from homology"/>
<feature type="chain" id="PRO_1000050933" description="UDP-3-O-acylglucosamine N-acyltransferase">
    <location>
        <begin position="1"/>
        <end position="361"/>
    </location>
</feature>
<feature type="active site" description="Proton acceptor" evidence="1">
    <location>
        <position position="253"/>
    </location>
</feature>
<reference key="1">
    <citation type="journal article" date="2010" name="Genome Biol. Evol.">
        <title>Continuing evolution of Burkholderia mallei through genome reduction and large-scale rearrangements.</title>
        <authorList>
            <person name="Losada L."/>
            <person name="Ronning C.M."/>
            <person name="DeShazer D."/>
            <person name="Woods D."/>
            <person name="Fedorova N."/>
            <person name="Kim H.S."/>
            <person name="Shabalina S.A."/>
            <person name="Pearson T.R."/>
            <person name="Brinkac L."/>
            <person name="Tan P."/>
            <person name="Nandi T."/>
            <person name="Crabtree J."/>
            <person name="Badger J."/>
            <person name="Beckstrom-Sternberg S."/>
            <person name="Saqib M."/>
            <person name="Schutzer S.E."/>
            <person name="Keim P."/>
            <person name="Nierman W.C."/>
        </authorList>
    </citation>
    <scope>NUCLEOTIDE SEQUENCE [LARGE SCALE GENOMIC DNA]</scope>
    <source>
        <strain>SAVP1</strain>
    </source>
</reference>
<dbReference type="EC" id="2.3.1.191" evidence="1"/>
<dbReference type="EMBL" id="CP000526">
    <property type="protein sequence ID" value="ABM52086.1"/>
    <property type="molecule type" value="Genomic_DNA"/>
</dbReference>
<dbReference type="RefSeq" id="WP_004191858.1">
    <property type="nucleotide sequence ID" value="NC_008785.1"/>
</dbReference>
<dbReference type="SMR" id="A1V558"/>
<dbReference type="GeneID" id="93060690"/>
<dbReference type="KEGG" id="bmv:BMASAVP1_A2045"/>
<dbReference type="HOGENOM" id="CLU_049865_0_1_4"/>
<dbReference type="UniPathway" id="UPA00973"/>
<dbReference type="GO" id="GO:0016020">
    <property type="term" value="C:membrane"/>
    <property type="evidence" value="ECO:0007669"/>
    <property type="project" value="GOC"/>
</dbReference>
<dbReference type="GO" id="GO:0016410">
    <property type="term" value="F:N-acyltransferase activity"/>
    <property type="evidence" value="ECO:0007669"/>
    <property type="project" value="InterPro"/>
</dbReference>
<dbReference type="GO" id="GO:0009245">
    <property type="term" value="P:lipid A biosynthetic process"/>
    <property type="evidence" value="ECO:0007669"/>
    <property type="project" value="UniProtKB-UniRule"/>
</dbReference>
<dbReference type="CDD" id="cd03352">
    <property type="entry name" value="LbH_LpxD"/>
    <property type="match status" value="1"/>
</dbReference>
<dbReference type="Gene3D" id="2.160.10.10">
    <property type="entry name" value="Hexapeptide repeat proteins"/>
    <property type="match status" value="1"/>
</dbReference>
<dbReference type="Gene3D" id="3.40.1390.10">
    <property type="entry name" value="MurE/MurF, N-terminal domain"/>
    <property type="match status" value="1"/>
</dbReference>
<dbReference type="HAMAP" id="MF_00523">
    <property type="entry name" value="LpxD"/>
    <property type="match status" value="1"/>
</dbReference>
<dbReference type="InterPro" id="IPR001451">
    <property type="entry name" value="Hexapep"/>
</dbReference>
<dbReference type="InterPro" id="IPR018357">
    <property type="entry name" value="Hexapep_transf_CS"/>
</dbReference>
<dbReference type="InterPro" id="IPR007691">
    <property type="entry name" value="LpxD"/>
</dbReference>
<dbReference type="InterPro" id="IPR011004">
    <property type="entry name" value="Trimer_LpxA-like_sf"/>
</dbReference>
<dbReference type="InterPro" id="IPR020573">
    <property type="entry name" value="UDP_GlcNAc_AcTrfase_non-rep"/>
</dbReference>
<dbReference type="NCBIfam" id="TIGR01853">
    <property type="entry name" value="lipid_A_lpxD"/>
    <property type="match status" value="1"/>
</dbReference>
<dbReference type="NCBIfam" id="NF002060">
    <property type="entry name" value="PRK00892.1"/>
    <property type="match status" value="1"/>
</dbReference>
<dbReference type="PANTHER" id="PTHR43378">
    <property type="entry name" value="UDP-3-O-ACYLGLUCOSAMINE N-ACYLTRANSFERASE"/>
    <property type="match status" value="1"/>
</dbReference>
<dbReference type="PANTHER" id="PTHR43378:SF2">
    <property type="entry name" value="UDP-3-O-ACYLGLUCOSAMINE N-ACYLTRANSFERASE 1, MITOCHONDRIAL-RELATED"/>
    <property type="match status" value="1"/>
</dbReference>
<dbReference type="Pfam" id="PF00132">
    <property type="entry name" value="Hexapep"/>
    <property type="match status" value="2"/>
</dbReference>
<dbReference type="Pfam" id="PF14602">
    <property type="entry name" value="Hexapep_2"/>
    <property type="match status" value="1"/>
</dbReference>
<dbReference type="Pfam" id="PF04613">
    <property type="entry name" value="LpxD"/>
    <property type="match status" value="1"/>
</dbReference>
<dbReference type="SUPFAM" id="SSF51161">
    <property type="entry name" value="Trimeric LpxA-like enzymes"/>
    <property type="match status" value="1"/>
</dbReference>
<dbReference type="PROSITE" id="PS00101">
    <property type="entry name" value="HEXAPEP_TRANSFERASES"/>
    <property type="match status" value="3"/>
</dbReference>
<organism>
    <name type="scientific">Burkholderia mallei (strain SAVP1)</name>
    <dbReference type="NCBI Taxonomy" id="320388"/>
    <lineage>
        <taxon>Bacteria</taxon>
        <taxon>Pseudomonadati</taxon>
        <taxon>Pseudomonadota</taxon>
        <taxon>Betaproteobacteria</taxon>
        <taxon>Burkholderiales</taxon>
        <taxon>Burkholderiaceae</taxon>
        <taxon>Burkholderia</taxon>
        <taxon>pseudomallei group</taxon>
    </lineage>
</organism>
<protein>
    <recommendedName>
        <fullName evidence="1">UDP-3-O-acylglucosamine N-acyltransferase</fullName>
        <ecNumber evidence="1">2.3.1.191</ecNumber>
    </recommendedName>
</protein>
<name>LPXD_BURMS</name>